<gene>
    <name type="primary">ELMO2</name>
</gene>
<name>ELMO2_BOVIN</name>
<evidence type="ECO:0000250" key="1"/>
<evidence type="ECO:0000250" key="2">
    <source>
        <dbReference type="UniProtKB" id="Q8BHL5"/>
    </source>
</evidence>
<evidence type="ECO:0000250" key="3">
    <source>
        <dbReference type="UniProtKB" id="Q96JJ3"/>
    </source>
</evidence>
<evidence type="ECO:0000255" key="4">
    <source>
        <dbReference type="PROSITE-ProRule" id="PRU00664"/>
    </source>
</evidence>
<organism>
    <name type="scientific">Bos taurus</name>
    <name type="common">Bovine</name>
    <dbReference type="NCBI Taxonomy" id="9913"/>
    <lineage>
        <taxon>Eukaryota</taxon>
        <taxon>Metazoa</taxon>
        <taxon>Chordata</taxon>
        <taxon>Craniata</taxon>
        <taxon>Vertebrata</taxon>
        <taxon>Euteleostomi</taxon>
        <taxon>Mammalia</taxon>
        <taxon>Eutheria</taxon>
        <taxon>Laurasiatheria</taxon>
        <taxon>Artiodactyla</taxon>
        <taxon>Ruminantia</taxon>
        <taxon>Pecora</taxon>
        <taxon>Bovidae</taxon>
        <taxon>Bovinae</taxon>
        <taxon>Bos</taxon>
    </lineage>
</organism>
<comment type="function">
    <text evidence="1">Involved in cytoskeletal rearrangements required for phagocytosis of apoptotic cells and cell motility. Acts in association with DOCK1 and CRK. Was initially proposed to be required in complex with DOCK1 to activate Rac Rho small GTPases. May enhance the guanine nucleotide exchange factor (GEF) activity of DOCK1 (By similarity).</text>
</comment>
<comment type="subunit">
    <text evidence="2 3">Interacts directly with the SH3-domain of DOCK1 via its SH3-binding site (By similarity). Probably forms a heterotrimeric complex with DOCK1 and RAC1. Interacts with ARHGEF16, DOCK4 and EPHA2; mediates activation of RAC1 by EPHA2 (By similarity). Interacts with ADGRB3 (By similarity). Interacts with AUTS2; the interaction is direct (By similarity).</text>
</comment>
<comment type="subcellular location">
    <subcellularLocation>
        <location evidence="3">Cytoplasm</location>
    </subcellularLocation>
    <subcellularLocation>
        <location evidence="3">Cytoplasm</location>
        <location evidence="3">Cytosol</location>
    </subcellularLocation>
    <subcellularLocation>
        <location evidence="3">Membrane</location>
    </subcellularLocation>
</comment>
<keyword id="KW-0053">Apoptosis</keyword>
<keyword id="KW-0963">Cytoplasm</keyword>
<keyword id="KW-0472">Membrane</keyword>
<keyword id="KW-0581">Phagocytosis</keyword>
<keyword id="KW-0597">Phosphoprotein</keyword>
<keyword id="KW-1185">Reference proteome</keyword>
<keyword id="KW-0729">SH3-binding</keyword>
<sequence>MPPPSDIVKVAIEWPGANAQLLEIDQKRPLASIIKEVCDGWSLPNPEYYTLRYADGPQLYITEQTRSDIKNGTILQLAISPSRAARQLMERTQSSSMETRLDAMKELAKLSADVTFATEFINMDGIVVLTRLVESGTKLLSHYSEMLAFTLTAFLELMDHGIVSWDMVSITFIKQIAGYVSQPMVDVSILQRSLAILESMVLNSQSLYQKIAEEITVGQLISHLQVSNQEIQTYAIALINALFLKAPEDKRQDMANAFAQKHLRSIILNHVIRGNRPIKTEMAHQLYVLQVLTFNLLEERMMTKMDPNDQAQRDIIFELRRIAFDADSDPSNAPGSGTEKRKAMYTKDYKMLGFTNHINPAMDFTQTPPGMLALDNMLYLAKVHQDTYIRIVLENSSREDKHECPFGRSAIELTKMLCEILQVGELPNEGRNDYHPMFFTHDRAFEELFGICIQLLNKTWKEMRATAEDFNKVMQVVREQITRALPSKPNSLDQFKSKLRSLSYSEILRLRQSERMSQDDFQSPPIVELREKIQPEILELIKQQRLNRLCEGSSFRKIGNRRRQERFWYCRLALNHKVLHYGDLDDNPQGEVTFESLQEKIPVADIKAIVTGKDCPHMKEKSALKQNKEVLELAFSILYDPDETLNFIAPNKYEYCIWIDGLSALLGKDMSSELTKSDRDTLLSMEMKLRLLDLENIQIPEAPPPVPKEPSSYDFVYHYG</sequence>
<reference key="1">
    <citation type="submission" date="2006-04" db="EMBL/GenBank/DDBJ databases">
        <authorList>
            <consortium name="NIH - Mammalian Gene Collection (MGC) project"/>
        </authorList>
    </citation>
    <scope>NUCLEOTIDE SEQUENCE [LARGE SCALE MRNA]</scope>
    <source>
        <strain>Hereford</strain>
        <tissue>Uterus</tissue>
    </source>
</reference>
<feature type="chain" id="PRO_0000312353" description="Engulfment and cell motility protein 2">
    <location>
        <begin position="1"/>
        <end position="720"/>
    </location>
</feature>
<feature type="domain" description="ELMO" evidence="4">
    <location>
        <begin position="310"/>
        <end position="484"/>
    </location>
</feature>
<feature type="domain" description="PH">
    <location>
        <begin position="553"/>
        <end position="674"/>
    </location>
</feature>
<feature type="short sequence motif" description="SH3-binding">
    <location>
        <begin position="700"/>
        <end position="707"/>
    </location>
</feature>
<feature type="modified residue" description="Phosphotyrosine" evidence="2">
    <location>
        <position position="48"/>
    </location>
</feature>
<feature type="modified residue" description="Phosphoserine" evidence="3">
    <location>
        <position position="503"/>
    </location>
</feature>
<feature type="modified residue" description="Phosphotyrosine" evidence="2">
    <location>
        <position position="717"/>
    </location>
</feature>
<protein>
    <recommendedName>
        <fullName>Engulfment and cell motility protein 2</fullName>
    </recommendedName>
</protein>
<accession>A4FUD6</accession>
<dbReference type="EMBL" id="BC114724">
    <property type="protein sequence ID" value="AAI14725.1"/>
    <property type="molecule type" value="mRNA"/>
</dbReference>
<dbReference type="RefSeq" id="NP_001076860.1">
    <property type="nucleotide sequence ID" value="NM_001083391.1"/>
</dbReference>
<dbReference type="SMR" id="A4FUD6"/>
<dbReference type="FunCoup" id="A4FUD6">
    <property type="interactions" value="2417"/>
</dbReference>
<dbReference type="STRING" id="9913.ENSBTAP00000074011"/>
<dbReference type="PaxDb" id="9913-ENSBTAP00000004747"/>
<dbReference type="GeneID" id="508361"/>
<dbReference type="KEGG" id="bta:508361"/>
<dbReference type="CTD" id="63916"/>
<dbReference type="eggNOG" id="KOG2999">
    <property type="taxonomic scope" value="Eukaryota"/>
</dbReference>
<dbReference type="InParanoid" id="A4FUD6"/>
<dbReference type="OrthoDB" id="28413at2759"/>
<dbReference type="Proteomes" id="UP000009136">
    <property type="component" value="Unplaced"/>
</dbReference>
<dbReference type="GO" id="GO:0005829">
    <property type="term" value="C:cytosol"/>
    <property type="evidence" value="ECO:0000250"/>
    <property type="project" value="UniProtKB"/>
</dbReference>
<dbReference type="GO" id="GO:0016020">
    <property type="term" value="C:membrane"/>
    <property type="evidence" value="ECO:0000250"/>
    <property type="project" value="UniProtKB"/>
</dbReference>
<dbReference type="GO" id="GO:0017124">
    <property type="term" value="F:SH3 domain binding"/>
    <property type="evidence" value="ECO:0007669"/>
    <property type="project" value="UniProtKB-KW"/>
</dbReference>
<dbReference type="GO" id="GO:0007015">
    <property type="term" value="P:actin filament organization"/>
    <property type="evidence" value="ECO:0000318"/>
    <property type="project" value="GO_Central"/>
</dbReference>
<dbReference type="GO" id="GO:0006915">
    <property type="term" value="P:apoptotic process"/>
    <property type="evidence" value="ECO:0007669"/>
    <property type="project" value="UniProtKB-KW"/>
</dbReference>
<dbReference type="GO" id="GO:0060326">
    <property type="term" value="P:cell chemotaxis"/>
    <property type="evidence" value="ECO:0000250"/>
    <property type="project" value="UniProtKB"/>
</dbReference>
<dbReference type="GO" id="GO:0048870">
    <property type="term" value="P:cell motility"/>
    <property type="evidence" value="ECO:0000318"/>
    <property type="project" value="GO_Central"/>
</dbReference>
<dbReference type="GO" id="GO:0006909">
    <property type="term" value="P:phagocytosis"/>
    <property type="evidence" value="ECO:0007669"/>
    <property type="project" value="UniProtKB-KW"/>
</dbReference>
<dbReference type="CDD" id="cd13359">
    <property type="entry name" value="PH_ELMO1_CED-12"/>
    <property type="match status" value="1"/>
</dbReference>
<dbReference type="FunFam" id="1.25.10.10:FF:000049">
    <property type="entry name" value="Engulfment and cell motility 1 (Ced-12 homolog)"/>
    <property type="match status" value="1"/>
</dbReference>
<dbReference type="FunFam" id="2.30.29.30:FF:000053">
    <property type="entry name" value="Engulfment and cell motility protein 1"/>
    <property type="match status" value="1"/>
</dbReference>
<dbReference type="Gene3D" id="6.10.250.810">
    <property type="match status" value="1"/>
</dbReference>
<dbReference type="Gene3D" id="1.25.10.10">
    <property type="entry name" value="Leucine-rich Repeat Variant"/>
    <property type="match status" value="1"/>
</dbReference>
<dbReference type="Gene3D" id="2.30.29.30">
    <property type="entry name" value="Pleckstrin-homology domain (PH domain)/Phosphotyrosine-binding domain (PTB)"/>
    <property type="match status" value="1"/>
</dbReference>
<dbReference type="InterPro" id="IPR011989">
    <property type="entry name" value="ARM-like"/>
</dbReference>
<dbReference type="InterPro" id="IPR016024">
    <property type="entry name" value="ARM-type_fold"/>
</dbReference>
<dbReference type="InterPro" id="IPR024574">
    <property type="entry name" value="ELMO_ARM"/>
</dbReference>
<dbReference type="InterPro" id="IPR006816">
    <property type="entry name" value="ELMO_dom"/>
</dbReference>
<dbReference type="InterPro" id="IPR050868">
    <property type="entry name" value="ELMO_domain-containing"/>
</dbReference>
<dbReference type="InterPro" id="IPR011993">
    <property type="entry name" value="PH-like_dom_sf"/>
</dbReference>
<dbReference type="InterPro" id="IPR001849">
    <property type="entry name" value="PH_domain"/>
</dbReference>
<dbReference type="PANTHER" id="PTHR12771">
    <property type="entry name" value="ENGULFMENT AND CELL MOTILITY"/>
    <property type="match status" value="1"/>
</dbReference>
<dbReference type="PANTHER" id="PTHR12771:SF8">
    <property type="entry name" value="ENGULFMENT AND CELL MOTILITY PROTEIN 2"/>
    <property type="match status" value="1"/>
</dbReference>
<dbReference type="Pfam" id="PF11841">
    <property type="entry name" value="ELMO_ARM"/>
    <property type="match status" value="1"/>
</dbReference>
<dbReference type="Pfam" id="PF04727">
    <property type="entry name" value="ELMO_CED12"/>
    <property type="match status" value="1"/>
</dbReference>
<dbReference type="Pfam" id="PF16457">
    <property type="entry name" value="PH_12"/>
    <property type="match status" value="1"/>
</dbReference>
<dbReference type="SUPFAM" id="SSF48371">
    <property type="entry name" value="ARM repeat"/>
    <property type="match status" value="1"/>
</dbReference>
<dbReference type="SUPFAM" id="SSF50729">
    <property type="entry name" value="PH domain-like"/>
    <property type="match status" value="1"/>
</dbReference>
<dbReference type="PROSITE" id="PS51335">
    <property type="entry name" value="ELMO"/>
    <property type="match status" value="1"/>
</dbReference>
<proteinExistence type="evidence at transcript level"/>